<reference key="1">
    <citation type="journal article" date="2009" name="BMC Microbiol.">
        <title>The genome sequence of Geobacter metallireducens: features of metabolism, physiology and regulation common and dissimilar to Geobacter sulfurreducens.</title>
        <authorList>
            <person name="Aklujkar M."/>
            <person name="Krushkal J."/>
            <person name="DiBartolo G."/>
            <person name="Lapidus A."/>
            <person name="Land M.L."/>
            <person name="Lovley D.R."/>
        </authorList>
    </citation>
    <scope>NUCLEOTIDE SEQUENCE [LARGE SCALE GENOMIC DNA]</scope>
    <source>
        <strain>ATCC 53774 / DSM 7210 / GS-15</strain>
    </source>
</reference>
<name>GLYA_GEOMG</name>
<gene>
    <name evidence="1" type="primary">glyA</name>
    <name type="ordered locus">Gmet_1605</name>
</gene>
<protein>
    <recommendedName>
        <fullName evidence="1">Serine hydroxymethyltransferase</fullName>
        <shortName evidence="1">SHMT</shortName>
        <shortName evidence="1">Serine methylase</shortName>
        <ecNumber evidence="1">2.1.2.1</ecNumber>
    </recommendedName>
</protein>
<comment type="function">
    <text evidence="1">Catalyzes the reversible interconversion of serine and glycine with tetrahydrofolate (THF) serving as the one-carbon carrier. This reaction serves as the major source of one-carbon groups required for the biosynthesis of purines, thymidylate, methionine, and other important biomolecules. Also exhibits THF-independent aldolase activity toward beta-hydroxyamino acids, producing glycine and aldehydes, via a retro-aldol mechanism.</text>
</comment>
<comment type="catalytic activity">
    <reaction evidence="1">
        <text>(6R)-5,10-methylene-5,6,7,8-tetrahydrofolate + glycine + H2O = (6S)-5,6,7,8-tetrahydrofolate + L-serine</text>
        <dbReference type="Rhea" id="RHEA:15481"/>
        <dbReference type="ChEBI" id="CHEBI:15377"/>
        <dbReference type="ChEBI" id="CHEBI:15636"/>
        <dbReference type="ChEBI" id="CHEBI:33384"/>
        <dbReference type="ChEBI" id="CHEBI:57305"/>
        <dbReference type="ChEBI" id="CHEBI:57453"/>
        <dbReference type="EC" id="2.1.2.1"/>
    </reaction>
</comment>
<comment type="cofactor">
    <cofactor evidence="1">
        <name>pyridoxal 5'-phosphate</name>
        <dbReference type="ChEBI" id="CHEBI:597326"/>
    </cofactor>
</comment>
<comment type="pathway">
    <text evidence="1">One-carbon metabolism; tetrahydrofolate interconversion.</text>
</comment>
<comment type="pathway">
    <text evidence="1">Amino-acid biosynthesis; glycine biosynthesis; glycine from L-serine: step 1/1.</text>
</comment>
<comment type="subunit">
    <text evidence="1">Homodimer.</text>
</comment>
<comment type="subcellular location">
    <subcellularLocation>
        <location evidence="1">Cytoplasm</location>
    </subcellularLocation>
</comment>
<comment type="similarity">
    <text evidence="1">Belongs to the SHMT family.</text>
</comment>
<evidence type="ECO:0000255" key="1">
    <source>
        <dbReference type="HAMAP-Rule" id="MF_00051"/>
    </source>
</evidence>
<keyword id="KW-0028">Amino-acid biosynthesis</keyword>
<keyword id="KW-0963">Cytoplasm</keyword>
<keyword id="KW-0554">One-carbon metabolism</keyword>
<keyword id="KW-0663">Pyridoxal phosphate</keyword>
<keyword id="KW-1185">Reference proteome</keyword>
<keyword id="KW-0808">Transferase</keyword>
<proteinExistence type="inferred from homology"/>
<feature type="chain" id="PRO_0000234979" description="Serine hydroxymethyltransferase">
    <location>
        <begin position="1"/>
        <end position="415"/>
    </location>
</feature>
<feature type="binding site" evidence="1">
    <location>
        <position position="117"/>
    </location>
    <ligand>
        <name>(6S)-5,6,7,8-tetrahydrofolate</name>
        <dbReference type="ChEBI" id="CHEBI:57453"/>
    </ligand>
</feature>
<feature type="binding site" evidence="1">
    <location>
        <begin position="121"/>
        <end position="123"/>
    </location>
    <ligand>
        <name>(6S)-5,6,7,8-tetrahydrofolate</name>
        <dbReference type="ChEBI" id="CHEBI:57453"/>
    </ligand>
</feature>
<feature type="binding site" evidence="1">
    <location>
        <position position="241"/>
    </location>
    <ligand>
        <name>(6S)-5,6,7,8-tetrahydrofolate</name>
        <dbReference type="ChEBI" id="CHEBI:57453"/>
    </ligand>
</feature>
<feature type="binding site" evidence="1">
    <location>
        <begin position="349"/>
        <end position="351"/>
    </location>
    <ligand>
        <name>(6S)-5,6,7,8-tetrahydrofolate</name>
        <dbReference type="ChEBI" id="CHEBI:57453"/>
    </ligand>
</feature>
<feature type="site" description="Plays an important role in substrate specificity" evidence="1">
    <location>
        <position position="225"/>
    </location>
</feature>
<feature type="modified residue" description="N6-(pyridoxal phosphate)lysine" evidence="1">
    <location>
        <position position="226"/>
    </location>
</feature>
<accession>Q39V87</accession>
<sequence>MSILETFDPAVAEAIRHETERQEYNLELIASENFVSEAVMEAQGSVLTNKYAEGYPGKRYYGGCHHVDVVENLAIERAKELFGADHANVQPHSGSQANMAVYFSVLKPGDTILGMNLSHGGHLTHGSPVNFSGRFFNVVPYGVSQETETIDFNEVERLALEHKPKLIVVGASAYPRVLDFAAFRAIADKVGALVMVDMAHIAGLVAAGLHPSPVPYAEFVTTTTHKTLRGPRGGMILCREEFAKTLNSNIFPGIQGGPLMHVIAAKAVAFKEALAPEFKLYQEQIVKNARTLADELMKRGFRLVSGGTDNHLMLVNLTGTELTGKVAEEALDKAGITVNKNTVPFETRSPFVTSGFRIGTPAATSHGLKEAEMVEVAAFIAEALANVGNEAKLAEVKGKVNALMGRFPLYASRLK</sequence>
<dbReference type="EC" id="2.1.2.1" evidence="1"/>
<dbReference type="EMBL" id="CP000148">
    <property type="protein sequence ID" value="ABB31837.1"/>
    <property type="molecule type" value="Genomic_DNA"/>
</dbReference>
<dbReference type="RefSeq" id="WP_004511460.1">
    <property type="nucleotide sequence ID" value="NC_007517.1"/>
</dbReference>
<dbReference type="SMR" id="Q39V87"/>
<dbReference type="STRING" id="269799.Gmet_1605"/>
<dbReference type="KEGG" id="gme:Gmet_1605"/>
<dbReference type="eggNOG" id="COG0112">
    <property type="taxonomic scope" value="Bacteria"/>
</dbReference>
<dbReference type="HOGENOM" id="CLU_022477_2_1_7"/>
<dbReference type="UniPathway" id="UPA00193"/>
<dbReference type="UniPathway" id="UPA00288">
    <property type="reaction ID" value="UER01023"/>
</dbReference>
<dbReference type="Proteomes" id="UP000007073">
    <property type="component" value="Chromosome"/>
</dbReference>
<dbReference type="GO" id="GO:0005829">
    <property type="term" value="C:cytosol"/>
    <property type="evidence" value="ECO:0007669"/>
    <property type="project" value="TreeGrafter"/>
</dbReference>
<dbReference type="GO" id="GO:0004372">
    <property type="term" value="F:glycine hydroxymethyltransferase activity"/>
    <property type="evidence" value="ECO:0007669"/>
    <property type="project" value="UniProtKB-UniRule"/>
</dbReference>
<dbReference type="GO" id="GO:0030170">
    <property type="term" value="F:pyridoxal phosphate binding"/>
    <property type="evidence" value="ECO:0007669"/>
    <property type="project" value="UniProtKB-UniRule"/>
</dbReference>
<dbReference type="GO" id="GO:0019264">
    <property type="term" value="P:glycine biosynthetic process from serine"/>
    <property type="evidence" value="ECO:0007669"/>
    <property type="project" value="UniProtKB-UniRule"/>
</dbReference>
<dbReference type="GO" id="GO:0035999">
    <property type="term" value="P:tetrahydrofolate interconversion"/>
    <property type="evidence" value="ECO:0007669"/>
    <property type="project" value="UniProtKB-UniRule"/>
</dbReference>
<dbReference type="CDD" id="cd00378">
    <property type="entry name" value="SHMT"/>
    <property type="match status" value="1"/>
</dbReference>
<dbReference type="FunFam" id="3.40.640.10:FF:000001">
    <property type="entry name" value="Serine hydroxymethyltransferase"/>
    <property type="match status" value="1"/>
</dbReference>
<dbReference type="FunFam" id="3.90.1150.10:FF:000003">
    <property type="entry name" value="Serine hydroxymethyltransferase"/>
    <property type="match status" value="1"/>
</dbReference>
<dbReference type="Gene3D" id="3.90.1150.10">
    <property type="entry name" value="Aspartate Aminotransferase, domain 1"/>
    <property type="match status" value="1"/>
</dbReference>
<dbReference type="Gene3D" id="3.40.640.10">
    <property type="entry name" value="Type I PLP-dependent aspartate aminotransferase-like (Major domain)"/>
    <property type="match status" value="1"/>
</dbReference>
<dbReference type="HAMAP" id="MF_00051">
    <property type="entry name" value="SHMT"/>
    <property type="match status" value="1"/>
</dbReference>
<dbReference type="InterPro" id="IPR015424">
    <property type="entry name" value="PyrdxlP-dep_Trfase"/>
</dbReference>
<dbReference type="InterPro" id="IPR015421">
    <property type="entry name" value="PyrdxlP-dep_Trfase_major"/>
</dbReference>
<dbReference type="InterPro" id="IPR015422">
    <property type="entry name" value="PyrdxlP-dep_Trfase_small"/>
</dbReference>
<dbReference type="InterPro" id="IPR001085">
    <property type="entry name" value="Ser_HO-MeTrfase"/>
</dbReference>
<dbReference type="InterPro" id="IPR049943">
    <property type="entry name" value="Ser_HO-MeTrfase-like"/>
</dbReference>
<dbReference type="InterPro" id="IPR019798">
    <property type="entry name" value="Ser_HO-MeTrfase_PLP_BS"/>
</dbReference>
<dbReference type="InterPro" id="IPR039429">
    <property type="entry name" value="SHMT-like_dom"/>
</dbReference>
<dbReference type="NCBIfam" id="NF000586">
    <property type="entry name" value="PRK00011.1"/>
    <property type="match status" value="1"/>
</dbReference>
<dbReference type="PANTHER" id="PTHR11680">
    <property type="entry name" value="SERINE HYDROXYMETHYLTRANSFERASE"/>
    <property type="match status" value="1"/>
</dbReference>
<dbReference type="PANTHER" id="PTHR11680:SF50">
    <property type="entry name" value="SERINE HYDROXYMETHYLTRANSFERASE"/>
    <property type="match status" value="1"/>
</dbReference>
<dbReference type="Pfam" id="PF00464">
    <property type="entry name" value="SHMT"/>
    <property type="match status" value="1"/>
</dbReference>
<dbReference type="PIRSF" id="PIRSF000412">
    <property type="entry name" value="SHMT"/>
    <property type="match status" value="1"/>
</dbReference>
<dbReference type="SUPFAM" id="SSF53383">
    <property type="entry name" value="PLP-dependent transferases"/>
    <property type="match status" value="1"/>
</dbReference>
<dbReference type="PROSITE" id="PS00096">
    <property type="entry name" value="SHMT"/>
    <property type="match status" value="1"/>
</dbReference>
<organism>
    <name type="scientific">Geobacter metallireducens (strain ATCC 53774 / DSM 7210 / GS-15)</name>
    <dbReference type="NCBI Taxonomy" id="269799"/>
    <lineage>
        <taxon>Bacteria</taxon>
        <taxon>Pseudomonadati</taxon>
        <taxon>Thermodesulfobacteriota</taxon>
        <taxon>Desulfuromonadia</taxon>
        <taxon>Geobacterales</taxon>
        <taxon>Geobacteraceae</taxon>
        <taxon>Geobacter</taxon>
    </lineage>
</organism>